<organism>
    <name type="scientific">Salmonella typhimurium (strain LT2 / SGSC1412 / ATCC 700720)</name>
    <dbReference type="NCBI Taxonomy" id="99287"/>
    <lineage>
        <taxon>Bacteria</taxon>
        <taxon>Pseudomonadati</taxon>
        <taxon>Pseudomonadota</taxon>
        <taxon>Gammaproteobacteria</taxon>
        <taxon>Enterobacterales</taxon>
        <taxon>Enterobacteriaceae</taxon>
        <taxon>Salmonella</taxon>
    </lineage>
</organism>
<dbReference type="EC" id="2.7.7.80"/>
<dbReference type="EMBL" id="U53178">
    <property type="protein sequence ID" value="AAA96530.1"/>
    <property type="molecule type" value="Genomic_DNA"/>
</dbReference>
<dbReference type="EMBL" id="AE006468">
    <property type="protein sequence ID" value="AAL19781.1"/>
    <property type="molecule type" value="Genomic_DNA"/>
</dbReference>
<dbReference type="RefSeq" id="NP_459822.1">
    <property type="nucleotide sequence ID" value="NC_003197.2"/>
</dbReference>
<dbReference type="RefSeq" id="WP_000829280.1">
    <property type="nucleotide sequence ID" value="NC_003197.2"/>
</dbReference>
<dbReference type="SMR" id="Q56067"/>
<dbReference type="STRING" id="99287.STM0845"/>
<dbReference type="PaxDb" id="99287-STM0845"/>
<dbReference type="GeneID" id="1252364"/>
<dbReference type="KEGG" id="stm:STM0845"/>
<dbReference type="PATRIC" id="fig|99287.12.peg.882"/>
<dbReference type="HOGENOM" id="CLU_013325_10_3_6"/>
<dbReference type="OMA" id="EVACATM"/>
<dbReference type="PhylomeDB" id="Q56067"/>
<dbReference type="BioCyc" id="SENT99287:STM0845-MONOMER"/>
<dbReference type="UniPathway" id="UPA00344"/>
<dbReference type="Proteomes" id="UP000001014">
    <property type="component" value="Chromosome"/>
</dbReference>
<dbReference type="GO" id="GO:0005737">
    <property type="term" value="C:cytoplasm"/>
    <property type="evidence" value="ECO:0000318"/>
    <property type="project" value="GO_Central"/>
</dbReference>
<dbReference type="GO" id="GO:0005829">
    <property type="term" value="C:cytosol"/>
    <property type="evidence" value="ECO:0000318"/>
    <property type="project" value="GO_Central"/>
</dbReference>
<dbReference type="GO" id="GO:0005524">
    <property type="term" value="F:ATP binding"/>
    <property type="evidence" value="ECO:0007669"/>
    <property type="project" value="UniProtKB-KW"/>
</dbReference>
<dbReference type="GO" id="GO:0046872">
    <property type="term" value="F:metal ion binding"/>
    <property type="evidence" value="ECO:0007669"/>
    <property type="project" value="UniProtKB-KW"/>
</dbReference>
<dbReference type="GO" id="GO:0061605">
    <property type="term" value="F:molybdopterin-synthase adenylyltransferase activity"/>
    <property type="evidence" value="ECO:0007669"/>
    <property type="project" value="UniProtKB-EC"/>
</dbReference>
<dbReference type="GO" id="GO:0016779">
    <property type="term" value="F:nucleotidyltransferase activity"/>
    <property type="evidence" value="ECO:0000318"/>
    <property type="project" value="GO_Central"/>
</dbReference>
<dbReference type="GO" id="GO:0008146">
    <property type="term" value="F:sulfotransferase activity"/>
    <property type="evidence" value="ECO:0000318"/>
    <property type="project" value="GO_Central"/>
</dbReference>
<dbReference type="GO" id="GO:0004792">
    <property type="term" value="F:thiosulfate-cyanide sulfurtransferase activity"/>
    <property type="evidence" value="ECO:0000318"/>
    <property type="project" value="GO_Central"/>
</dbReference>
<dbReference type="GO" id="GO:0008641">
    <property type="term" value="F:ubiquitin-like modifier activating enzyme activity"/>
    <property type="evidence" value="ECO:0007669"/>
    <property type="project" value="InterPro"/>
</dbReference>
<dbReference type="GO" id="GO:0006777">
    <property type="term" value="P:Mo-molybdopterin cofactor biosynthetic process"/>
    <property type="evidence" value="ECO:0007669"/>
    <property type="project" value="UniProtKB-KW"/>
</dbReference>
<dbReference type="CDD" id="cd00757">
    <property type="entry name" value="ThiF_MoeB_HesA_family"/>
    <property type="match status" value="1"/>
</dbReference>
<dbReference type="FunFam" id="3.40.50.720:FF:000033">
    <property type="entry name" value="Adenylyltransferase and sulfurtransferase MOCS3"/>
    <property type="match status" value="1"/>
</dbReference>
<dbReference type="Gene3D" id="3.40.50.720">
    <property type="entry name" value="NAD(P)-binding Rossmann-like Domain"/>
    <property type="match status" value="1"/>
</dbReference>
<dbReference type="InterPro" id="IPR012730">
    <property type="entry name" value="Mopterin_Synthase_Sase_MoeB"/>
</dbReference>
<dbReference type="InterPro" id="IPR045886">
    <property type="entry name" value="ThiF/MoeB/HesA"/>
</dbReference>
<dbReference type="InterPro" id="IPR000594">
    <property type="entry name" value="ThiF_NAD_FAD-bd"/>
</dbReference>
<dbReference type="InterPro" id="IPR035985">
    <property type="entry name" value="Ubiquitin-activating_enz"/>
</dbReference>
<dbReference type="NCBIfam" id="TIGR02355">
    <property type="entry name" value="moeB"/>
    <property type="match status" value="1"/>
</dbReference>
<dbReference type="NCBIfam" id="NF004281">
    <property type="entry name" value="PRK05690.1"/>
    <property type="match status" value="1"/>
</dbReference>
<dbReference type="PANTHER" id="PTHR10953:SF194">
    <property type="entry name" value="MOLYBDOPTERIN-SYNTHASE ADENYLYLTRANSFERASE"/>
    <property type="match status" value="1"/>
</dbReference>
<dbReference type="PANTHER" id="PTHR10953">
    <property type="entry name" value="UBIQUITIN-ACTIVATING ENZYME E1"/>
    <property type="match status" value="1"/>
</dbReference>
<dbReference type="Pfam" id="PF00899">
    <property type="entry name" value="ThiF"/>
    <property type="match status" value="1"/>
</dbReference>
<dbReference type="SUPFAM" id="SSF69572">
    <property type="entry name" value="Activating enzymes of the ubiquitin-like proteins"/>
    <property type="match status" value="1"/>
</dbReference>
<protein>
    <recommendedName>
        <fullName>Molybdopterin-synthase adenylyltransferase</fullName>
        <ecNumber>2.7.7.80</ecNumber>
    </recommendedName>
    <alternativeName>
        <fullName>MoaD protein adenylase</fullName>
    </alternativeName>
    <alternativeName>
        <fullName>Molybdopterin-converting factor subunit 1 adenylase</fullName>
    </alternativeName>
    <alternativeName>
        <fullName>Sulfur carrier protein MoaD adenylyltransferase</fullName>
    </alternativeName>
</protein>
<proteinExistence type="inferred from homology"/>
<keyword id="KW-0067">ATP-binding</keyword>
<keyword id="KW-0479">Metal-binding</keyword>
<keyword id="KW-0501">Molybdenum cofactor biosynthesis</keyword>
<keyword id="KW-0547">Nucleotide-binding</keyword>
<keyword id="KW-0548">Nucleotidyltransferase</keyword>
<keyword id="KW-1185">Reference proteome</keyword>
<keyword id="KW-0808">Transferase</keyword>
<keyword id="KW-0862">Zinc</keyword>
<gene>
    <name type="primary">moeB</name>
    <name type="ordered locus">STM0845</name>
</gene>
<feature type="chain" id="PRO_0000120576" description="Molybdopterin-synthase adenylyltransferase">
    <location>
        <begin position="1"/>
        <end position="249"/>
    </location>
</feature>
<feature type="binding site" evidence="1">
    <location>
        <position position="41"/>
    </location>
    <ligand>
        <name>ATP</name>
        <dbReference type="ChEBI" id="CHEBI:30616"/>
    </ligand>
</feature>
<feature type="binding site" evidence="1">
    <location>
        <position position="62"/>
    </location>
    <ligand>
        <name>ATP</name>
        <dbReference type="ChEBI" id="CHEBI:30616"/>
    </ligand>
</feature>
<feature type="binding site" evidence="1">
    <location>
        <begin position="69"/>
        <end position="73"/>
    </location>
    <ligand>
        <name>ATP</name>
        <dbReference type="ChEBI" id="CHEBI:30616"/>
    </ligand>
</feature>
<feature type="binding site" evidence="1">
    <location>
        <position position="86"/>
    </location>
    <ligand>
        <name>ATP</name>
        <dbReference type="ChEBI" id="CHEBI:30616"/>
    </ligand>
</feature>
<feature type="binding site" evidence="1">
    <location>
        <begin position="130"/>
        <end position="131"/>
    </location>
    <ligand>
        <name>ATP</name>
        <dbReference type="ChEBI" id="CHEBI:30616"/>
    </ligand>
</feature>
<feature type="binding site" evidence="1">
    <location>
        <position position="172"/>
    </location>
    <ligand>
        <name>Zn(2+)</name>
        <dbReference type="ChEBI" id="CHEBI:29105"/>
    </ligand>
</feature>
<feature type="binding site" evidence="1">
    <location>
        <position position="175"/>
    </location>
    <ligand>
        <name>Zn(2+)</name>
        <dbReference type="ChEBI" id="CHEBI:29105"/>
    </ligand>
</feature>
<feature type="binding site" evidence="1">
    <location>
        <position position="244"/>
    </location>
    <ligand>
        <name>Zn(2+)</name>
        <dbReference type="ChEBI" id="CHEBI:29105"/>
    </ligand>
</feature>
<feature type="binding site" evidence="1">
    <location>
        <position position="247"/>
    </location>
    <ligand>
        <name>Zn(2+)</name>
        <dbReference type="ChEBI" id="CHEBI:29105"/>
    </ligand>
</feature>
<feature type="sequence conflict" description="In Ref. 1; AAA96530." evidence="2" ref="1">
    <original>M</original>
    <variation>I</variation>
    <location>
        <position position="9"/>
    </location>
</feature>
<feature type="sequence conflict" description="In Ref. 1; AAA96530." evidence="2" ref="1">
    <original>G</original>
    <variation>R</variation>
    <location>
        <position position="38"/>
    </location>
</feature>
<feature type="sequence conflict" description="In Ref. 1; AAA96530." evidence="2" ref="1">
    <original>S</original>
    <variation>A</variation>
    <location>
        <position position="117"/>
    </location>
</feature>
<feature type="sequence conflict" description="In Ref. 1; AAA96530." evidence="2" ref="1">
    <original>N</original>
    <variation>T</variation>
    <location>
        <position position="169"/>
    </location>
</feature>
<feature type="sequence conflict" description="In Ref. 1; AAA96530." evidence="2" ref="1">
    <original>G</original>
    <variation>E</variation>
    <location>
        <position position="221"/>
    </location>
</feature>
<comment type="function">
    <text evidence="1">Catalyzes the adenylation by ATP of the carboxyl group of the C-terminal glycine of sulfur carrier protein MoaD.</text>
</comment>
<comment type="catalytic activity">
    <reaction>
        <text>[molybdopterin-synthase sulfur-carrier protein]-C-terminal Gly-Gly + ATP + H(+) = [molybdopterin-synthase sulfur-carrier protein]-C-terminal Gly-Gly-AMP + diphosphate</text>
        <dbReference type="Rhea" id="RHEA:43616"/>
        <dbReference type="Rhea" id="RHEA-COMP:12159"/>
        <dbReference type="Rhea" id="RHEA-COMP:12202"/>
        <dbReference type="ChEBI" id="CHEBI:15378"/>
        <dbReference type="ChEBI" id="CHEBI:30616"/>
        <dbReference type="ChEBI" id="CHEBI:33019"/>
        <dbReference type="ChEBI" id="CHEBI:90618"/>
        <dbReference type="ChEBI" id="CHEBI:90778"/>
        <dbReference type="EC" id="2.7.7.80"/>
    </reaction>
</comment>
<comment type="cofactor">
    <cofactor evidence="1">
        <name>Zn(2+)</name>
        <dbReference type="ChEBI" id="CHEBI:29105"/>
    </cofactor>
    <text evidence="1">Binds 1 zinc ion per subunit.</text>
</comment>
<comment type="pathway">
    <text>Cofactor biosynthesis; molybdopterin biosynthesis.</text>
</comment>
<comment type="subunit">
    <text evidence="1">Homodimer. Forms a stable heterotetrameric complex of 2 MoeB and 2 MoaD during adenylation of MoaD (By similarity).</text>
</comment>
<comment type="similarity">
    <text evidence="2">Belongs to the HesA/MoeB/ThiF family.</text>
</comment>
<name>MOEB_SALTY</name>
<sequence>MAELSDQEMLRYNRQIILRGFDFEGQEALKDARVLVVGLGGLGCAATQYLAGAGVGQLTLLDFDTVSVSNLQRQTLHSDATVGQPKVESARDALARINPHITITPVNARLDDDAMTSLIAGHSLVLDCTDNVSVRNQLNAGCYTAKVPLISGAAIRMEGQVTVFTYRENEPCYRCLSRLFGENALTCVEAGVMAPLIGVIGSLQAMEAIKLLAHYGQPASGKIVMYDAMTCQFREMKLMRNPGCEVCGQ</sequence>
<reference key="1">
    <citation type="submission" date="1996-04" db="EMBL/GenBank/DDBJ databases">
        <authorList>
            <person name="Wong K.K."/>
            <person name="Kwan H.S."/>
        </authorList>
    </citation>
    <scope>NUCLEOTIDE SEQUENCE [GENOMIC DNA]</scope>
    <source>
        <strain>LT2</strain>
    </source>
</reference>
<reference key="2">
    <citation type="journal article" date="2001" name="Nature">
        <title>Complete genome sequence of Salmonella enterica serovar Typhimurium LT2.</title>
        <authorList>
            <person name="McClelland M."/>
            <person name="Sanderson K.E."/>
            <person name="Spieth J."/>
            <person name="Clifton S.W."/>
            <person name="Latreille P."/>
            <person name="Courtney L."/>
            <person name="Porwollik S."/>
            <person name="Ali J."/>
            <person name="Dante M."/>
            <person name="Du F."/>
            <person name="Hou S."/>
            <person name="Layman D."/>
            <person name="Leonard S."/>
            <person name="Nguyen C."/>
            <person name="Scott K."/>
            <person name="Holmes A."/>
            <person name="Grewal N."/>
            <person name="Mulvaney E."/>
            <person name="Ryan E."/>
            <person name="Sun H."/>
            <person name="Florea L."/>
            <person name="Miller W."/>
            <person name="Stoneking T."/>
            <person name="Nhan M."/>
            <person name="Waterston R."/>
            <person name="Wilson R.K."/>
        </authorList>
    </citation>
    <scope>NUCLEOTIDE SEQUENCE [LARGE SCALE GENOMIC DNA]</scope>
    <source>
        <strain>LT2 / SGSC1412 / ATCC 700720</strain>
    </source>
</reference>
<evidence type="ECO:0000250" key="1"/>
<evidence type="ECO:0000305" key="2"/>
<accession>Q56067</accession>